<dbReference type="EC" id="3.4.13.21" evidence="1"/>
<dbReference type="EMBL" id="CP001113">
    <property type="protein sequence ID" value="ACF64685.1"/>
    <property type="molecule type" value="Genomic_DNA"/>
</dbReference>
<dbReference type="RefSeq" id="WP_000421793.1">
    <property type="nucleotide sequence ID" value="NZ_CCMR01000003.1"/>
</dbReference>
<dbReference type="SMR" id="B4T1N0"/>
<dbReference type="MEROPS" id="S51.001"/>
<dbReference type="KEGG" id="see:SNSL254_A4528"/>
<dbReference type="HOGENOM" id="CLU_071689_0_0_6"/>
<dbReference type="Proteomes" id="UP000008824">
    <property type="component" value="Chromosome"/>
</dbReference>
<dbReference type="GO" id="GO:0005737">
    <property type="term" value="C:cytoplasm"/>
    <property type="evidence" value="ECO:0007669"/>
    <property type="project" value="UniProtKB-SubCell"/>
</dbReference>
<dbReference type="GO" id="GO:0016805">
    <property type="term" value="F:dipeptidase activity"/>
    <property type="evidence" value="ECO:0007669"/>
    <property type="project" value="UniProtKB-UniRule"/>
</dbReference>
<dbReference type="GO" id="GO:0008236">
    <property type="term" value="F:serine-type peptidase activity"/>
    <property type="evidence" value="ECO:0007669"/>
    <property type="project" value="UniProtKB-KW"/>
</dbReference>
<dbReference type="GO" id="GO:0006508">
    <property type="term" value="P:proteolysis"/>
    <property type="evidence" value="ECO:0007669"/>
    <property type="project" value="UniProtKB-UniRule"/>
</dbReference>
<dbReference type="CDD" id="cd03146">
    <property type="entry name" value="GAT1_Peptidase_E"/>
    <property type="match status" value="1"/>
</dbReference>
<dbReference type="FunFam" id="3.40.50.880:FF:000007">
    <property type="entry name" value="Peptidase E"/>
    <property type="match status" value="1"/>
</dbReference>
<dbReference type="Gene3D" id="3.40.50.880">
    <property type="match status" value="1"/>
</dbReference>
<dbReference type="HAMAP" id="MF_00510">
    <property type="entry name" value="Peptidase_E"/>
    <property type="match status" value="1"/>
</dbReference>
<dbReference type="InterPro" id="IPR029062">
    <property type="entry name" value="Class_I_gatase-like"/>
</dbReference>
<dbReference type="InterPro" id="IPR005320">
    <property type="entry name" value="Peptidase_S51"/>
</dbReference>
<dbReference type="InterPro" id="IPR023172">
    <property type="entry name" value="Peptidase_S51_dipeptidase-E"/>
</dbReference>
<dbReference type="NCBIfam" id="NF003642">
    <property type="entry name" value="PRK05282.1"/>
    <property type="match status" value="1"/>
</dbReference>
<dbReference type="PANTHER" id="PTHR20842:SF0">
    <property type="entry name" value="ALPHA-ASPARTYL DIPEPTIDASE"/>
    <property type="match status" value="1"/>
</dbReference>
<dbReference type="PANTHER" id="PTHR20842">
    <property type="entry name" value="PROTEASE S51 ALPHA-ASPARTYL DIPEPTIDASE"/>
    <property type="match status" value="1"/>
</dbReference>
<dbReference type="Pfam" id="PF03575">
    <property type="entry name" value="Peptidase_S51"/>
    <property type="match status" value="1"/>
</dbReference>
<dbReference type="SUPFAM" id="SSF52317">
    <property type="entry name" value="Class I glutamine amidotransferase-like"/>
    <property type="match status" value="1"/>
</dbReference>
<evidence type="ECO:0000255" key="1">
    <source>
        <dbReference type="HAMAP-Rule" id="MF_00510"/>
    </source>
</evidence>
<proteinExistence type="inferred from homology"/>
<comment type="function">
    <text evidence="1">Hydrolyzes dipeptides containing N-terminal aspartate residues. May play a role in allowing the cell to use peptide aspartate to spare carbon otherwise required for the synthesis of the aspartate family of amino acids.</text>
</comment>
<comment type="catalytic activity">
    <reaction evidence="1">
        <text>Dipeptidase E catalyzes the hydrolysis of dipeptides Asp-|-Xaa. It does not act on peptides with N-terminal Glu, Asn or Gln, nor does it cleave isoaspartyl peptides.</text>
        <dbReference type="EC" id="3.4.13.21"/>
    </reaction>
</comment>
<comment type="subcellular location">
    <subcellularLocation>
        <location evidence="1">Cytoplasm</location>
    </subcellularLocation>
</comment>
<comment type="similarity">
    <text evidence="1">Belongs to the peptidase S51 family.</text>
</comment>
<keyword id="KW-0963">Cytoplasm</keyword>
<keyword id="KW-0224">Dipeptidase</keyword>
<keyword id="KW-0378">Hydrolase</keyword>
<keyword id="KW-0645">Protease</keyword>
<keyword id="KW-0720">Serine protease</keyword>
<accession>B4T1N0</accession>
<sequence length="229" mass="24707">MELLLLSNSTLPGKAWLEHALPLIANQLNGRRSAVFIPFAGVTQTWDEYTDKTAEVLAPLGVNVTGIHRVADPLAAIEKAEIIIVGGGNTFQLLKESRERGLLAPVADRVKRGALYIGWSAGANLACPTIRTTNDMPIVDPNGFDALDLFPLQINPHFTNALPEGHKGETREQRIRELLVVAPELAVIGLPEGNWIQVSNGQAVLGGPNTTWVFKAGEEAVALEAGHRF</sequence>
<protein>
    <recommendedName>
        <fullName evidence="1">Peptidase E</fullName>
        <ecNumber evidence="1">3.4.13.21</ecNumber>
    </recommendedName>
    <alternativeName>
        <fullName evidence="1">Alpha-aspartyl dipeptidase</fullName>
    </alternativeName>
    <alternativeName>
        <fullName evidence="1">Asp-specific dipeptidase</fullName>
    </alternativeName>
    <alternativeName>
        <fullName evidence="1">Dipeptidase E</fullName>
    </alternativeName>
</protein>
<organism>
    <name type="scientific">Salmonella newport (strain SL254)</name>
    <dbReference type="NCBI Taxonomy" id="423368"/>
    <lineage>
        <taxon>Bacteria</taxon>
        <taxon>Pseudomonadati</taxon>
        <taxon>Pseudomonadota</taxon>
        <taxon>Gammaproteobacteria</taxon>
        <taxon>Enterobacterales</taxon>
        <taxon>Enterobacteriaceae</taxon>
        <taxon>Salmonella</taxon>
    </lineage>
</organism>
<gene>
    <name evidence="1" type="primary">pepE</name>
    <name type="ordered locus">SNSL254_A4528</name>
</gene>
<name>PEPE_SALNS</name>
<reference key="1">
    <citation type="journal article" date="2011" name="J. Bacteriol.">
        <title>Comparative genomics of 28 Salmonella enterica isolates: evidence for CRISPR-mediated adaptive sublineage evolution.</title>
        <authorList>
            <person name="Fricke W.F."/>
            <person name="Mammel M.K."/>
            <person name="McDermott P.F."/>
            <person name="Tartera C."/>
            <person name="White D.G."/>
            <person name="Leclerc J.E."/>
            <person name="Ravel J."/>
            <person name="Cebula T.A."/>
        </authorList>
    </citation>
    <scope>NUCLEOTIDE SEQUENCE [LARGE SCALE GENOMIC DNA]</scope>
    <source>
        <strain>SL254</strain>
    </source>
</reference>
<feature type="chain" id="PRO_1000127251" description="Peptidase E">
    <location>
        <begin position="1"/>
        <end position="229"/>
    </location>
</feature>
<feature type="active site" description="Charge relay system" evidence="1">
    <location>
        <position position="120"/>
    </location>
</feature>
<feature type="active site" description="Charge relay system" evidence="1">
    <location>
        <position position="135"/>
    </location>
</feature>
<feature type="active site" description="Charge relay system" evidence="1">
    <location>
        <position position="157"/>
    </location>
</feature>